<reference key="1">
    <citation type="journal article" date="2002" name="Nucleic Acids Res.">
        <title>Genome sequence of Shigella flexneri 2a: insights into pathogenicity through comparison with genomes of Escherichia coli K12 and O157.</title>
        <authorList>
            <person name="Jin Q."/>
            <person name="Yuan Z."/>
            <person name="Xu J."/>
            <person name="Wang Y."/>
            <person name="Shen Y."/>
            <person name="Lu W."/>
            <person name="Wang J."/>
            <person name="Liu H."/>
            <person name="Yang J."/>
            <person name="Yang F."/>
            <person name="Zhang X."/>
            <person name="Zhang J."/>
            <person name="Yang G."/>
            <person name="Wu H."/>
            <person name="Qu D."/>
            <person name="Dong J."/>
            <person name="Sun L."/>
            <person name="Xue Y."/>
            <person name="Zhao A."/>
            <person name="Gao Y."/>
            <person name="Zhu J."/>
            <person name="Kan B."/>
            <person name="Ding K."/>
            <person name="Chen S."/>
            <person name="Cheng H."/>
            <person name="Yao Z."/>
            <person name="He B."/>
            <person name="Chen R."/>
            <person name="Ma D."/>
            <person name="Qiang B."/>
            <person name="Wen Y."/>
            <person name="Hou Y."/>
            <person name="Yu J."/>
        </authorList>
    </citation>
    <scope>NUCLEOTIDE SEQUENCE [LARGE SCALE GENOMIC DNA]</scope>
    <source>
        <strain>301 / Serotype 2a</strain>
    </source>
</reference>
<reference key="2">
    <citation type="journal article" date="2003" name="Infect. Immun.">
        <title>Complete genome sequence and comparative genomics of Shigella flexneri serotype 2a strain 2457T.</title>
        <authorList>
            <person name="Wei J."/>
            <person name="Goldberg M.B."/>
            <person name="Burland V."/>
            <person name="Venkatesan M.M."/>
            <person name="Deng W."/>
            <person name="Fournier G."/>
            <person name="Mayhew G.F."/>
            <person name="Plunkett G. III"/>
            <person name="Rose D.J."/>
            <person name="Darling A."/>
            <person name="Mau B."/>
            <person name="Perna N.T."/>
            <person name="Payne S.M."/>
            <person name="Runyen-Janecky L.J."/>
            <person name="Zhou S."/>
            <person name="Schwartz D.C."/>
            <person name="Blattner F.R."/>
        </authorList>
    </citation>
    <scope>NUCLEOTIDE SEQUENCE [LARGE SCALE GENOMIC DNA]</scope>
    <source>
        <strain>ATCC 700930 / 2457T / Serotype 2a</strain>
    </source>
</reference>
<feature type="initiator methionine" description="Removed" evidence="1">
    <location>
        <position position="1"/>
    </location>
</feature>
<feature type="chain" id="PRO_0000075612" description="2-C-methyl-D-erythritol 4-phosphate cytidylyltransferase">
    <location>
        <begin position="2"/>
        <end position="236"/>
    </location>
</feature>
<feature type="site" description="Transition state stabilizer" evidence="2">
    <location>
        <position position="20"/>
    </location>
</feature>
<feature type="site" description="Transition state stabilizer" evidence="2">
    <location>
        <position position="27"/>
    </location>
</feature>
<feature type="site" description="Positions MEP for the nucleophilic attack" evidence="2">
    <location>
        <position position="157"/>
    </location>
</feature>
<feature type="site" description="Positions MEP for the nucleophilic attack" evidence="2">
    <location>
        <position position="213"/>
    </location>
</feature>
<gene>
    <name evidence="2" type="primary">ispD</name>
    <name type="ordered locus">SF2770</name>
    <name type="ordered locus">S2963</name>
</gene>
<sequence length="236" mass="25738">MATTHLDVCAVVPAAGFGRRMQTECPKQYLSIGNQTILEHSVHALLAHPRVTRVVIAISPGDSRFAQLPLANHPQITVVDGGDERADSVLAGLKAAGDVQWVLVHDAARPCLHQDDLARLLALSETSRTGGILAAPVRDTMKRAEPGKNAIAHTVDRNGLWHALTPQFFPRELLHDCLTRALNEGATITDEASALEYCGFHPQLVEGRADNIKVTRPEDLALAEFYLTRTIHQENT</sequence>
<evidence type="ECO:0000250" key="1"/>
<evidence type="ECO:0000255" key="2">
    <source>
        <dbReference type="HAMAP-Rule" id="MF_00108"/>
    </source>
</evidence>
<protein>
    <recommendedName>
        <fullName evidence="2">2-C-methyl-D-erythritol 4-phosphate cytidylyltransferase</fullName>
        <ecNumber evidence="2">2.7.7.60</ecNumber>
    </recommendedName>
    <alternativeName>
        <fullName evidence="2">4-diphosphocytidyl-2C-methyl-D-erythritol synthase</fullName>
    </alternativeName>
    <alternativeName>
        <fullName evidence="2">MEP cytidylyltransferase</fullName>
        <shortName evidence="2">MCT</shortName>
    </alternativeName>
</protein>
<accession>Q7C093</accession>
<accession>Q83JY1</accession>
<keyword id="KW-0414">Isoprene biosynthesis</keyword>
<keyword id="KW-0548">Nucleotidyltransferase</keyword>
<keyword id="KW-1185">Reference proteome</keyword>
<keyword id="KW-0808">Transferase</keyword>
<dbReference type="EC" id="2.7.7.60" evidence="2"/>
<dbReference type="EMBL" id="AE005674">
    <property type="protein sequence ID" value="AAN44259.1"/>
    <property type="molecule type" value="Genomic_DNA"/>
</dbReference>
<dbReference type="EMBL" id="AE014073">
    <property type="protein sequence ID" value="AAP18085.1"/>
    <property type="molecule type" value="Genomic_DNA"/>
</dbReference>
<dbReference type="RefSeq" id="NP_708552.1">
    <property type="nucleotide sequence ID" value="NC_004337.2"/>
</dbReference>
<dbReference type="RefSeq" id="WP_000246155.1">
    <property type="nucleotide sequence ID" value="NZ_WPGW01000039.1"/>
</dbReference>
<dbReference type="SMR" id="Q7C093"/>
<dbReference type="STRING" id="198214.SF2770"/>
<dbReference type="PaxDb" id="198214-SF2770"/>
<dbReference type="GeneID" id="1025758"/>
<dbReference type="KEGG" id="sfl:SF2770"/>
<dbReference type="KEGG" id="sfx:S2963"/>
<dbReference type="PATRIC" id="fig|198214.7.peg.3297"/>
<dbReference type="HOGENOM" id="CLU_061281_3_1_6"/>
<dbReference type="UniPathway" id="UPA00056">
    <property type="reaction ID" value="UER00093"/>
</dbReference>
<dbReference type="Proteomes" id="UP000001006">
    <property type="component" value="Chromosome"/>
</dbReference>
<dbReference type="Proteomes" id="UP000002673">
    <property type="component" value="Chromosome"/>
</dbReference>
<dbReference type="GO" id="GO:0050518">
    <property type="term" value="F:2-C-methyl-D-erythritol 4-phosphate cytidylyltransferase activity"/>
    <property type="evidence" value="ECO:0007669"/>
    <property type="project" value="UniProtKB-UniRule"/>
</dbReference>
<dbReference type="GO" id="GO:0019288">
    <property type="term" value="P:isopentenyl diphosphate biosynthetic process, methylerythritol 4-phosphate pathway"/>
    <property type="evidence" value="ECO:0007669"/>
    <property type="project" value="UniProtKB-UniRule"/>
</dbReference>
<dbReference type="CDD" id="cd02516">
    <property type="entry name" value="CDP-ME_synthetase"/>
    <property type="match status" value="1"/>
</dbReference>
<dbReference type="FunFam" id="3.90.550.10:FF:000003">
    <property type="entry name" value="2-C-methyl-D-erythritol 4-phosphate cytidylyltransferase"/>
    <property type="match status" value="1"/>
</dbReference>
<dbReference type="Gene3D" id="3.90.550.10">
    <property type="entry name" value="Spore Coat Polysaccharide Biosynthesis Protein SpsA, Chain A"/>
    <property type="match status" value="1"/>
</dbReference>
<dbReference type="HAMAP" id="MF_00108">
    <property type="entry name" value="IspD"/>
    <property type="match status" value="1"/>
</dbReference>
<dbReference type="InterPro" id="IPR001228">
    <property type="entry name" value="IspD"/>
</dbReference>
<dbReference type="InterPro" id="IPR034683">
    <property type="entry name" value="IspD/TarI"/>
</dbReference>
<dbReference type="InterPro" id="IPR050088">
    <property type="entry name" value="IspD/TarI_cytidylyltransf_bact"/>
</dbReference>
<dbReference type="InterPro" id="IPR018294">
    <property type="entry name" value="ISPD_synthase_CS"/>
</dbReference>
<dbReference type="InterPro" id="IPR029044">
    <property type="entry name" value="Nucleotide-diphossugar_trans"/>
</dbReference>
<dbReference type="NCBIfam" id="TIGR00453">
    <property type="entry name" value="ispD"/>
    <property type="match status" value="1"/>
</dbReference>
<dbReference type="PANTHER" id="PTHR32125">
    <property type="entry name" value="2-C-METHYL-D-ERYTHRITOL 4-PHOSPHATE CYTIDYLYLTRANSFERASE, CHLOROPLASTIC"/>
    <property type="match status" value="1"/>
</dbReference>
<dbReference type="PANTHER" id="PTHR32125:SF4">
    <property type="entry name" value="2-C-METHYL-D-ERYTHRITOL 4-PHOSPHATE CYTIDYLYLTRANSFERASE, CHLOROPLASTIC"/>
    <property type="match status" value="1"/>
</dbReference>
<dbReference type="Pfam" id="PF01128">
    <property type="entry name" value="IspD"/>
    <property type="match status" value="1"/>
</dbReference>
<dbReference type="SUPFAM" id="SSF53448">
    <property type="entry name" value="Nucleotide-diphospho-sugar transferases"/>
    <property type="match status" value="1"/>
</dbReference>
<dbReference type="PROSITE" id="PS01295">
    <property type="entry name" value="ISPD"/>
    <property type="match status" value="1"/>
</dbReference>
<comment type="function">
    <text evidence="2">Catalyzes the formation of 4-diphosphocytidyl-2-C-methyl-D-erythritol from CTP and 2-C-methyl-D-erythritol 4-phosphate (MEP).</text>
</comment>
<comment type="catalytic activity">
    <reaction evidence="2">
        <text>2-C-methyl-D-erythritol 4-phosphate + CTP + H(+) = 4-CDP-2-C-methyl-D-erythritol + diphosphate</text>
        <dbReference type="Rhea" id="RHEA:13429"/>
        <dbReference type="ChEBI" id="CHEBI:15378"/>
        <dbReference type="ChEBI" id="CHEBI:33019"/>
        <dbReference type="ChEBI" id="CHEBI:37563"/>
        <dbReference type="ChEBI" id="CHEBI:57823"/>
        <dbReference type="ChEBI" id="CHEBI:58262"/>
        <dbReference type="EC" id="2.7.7.60"/>
    </reaction>
</comment>
<comment type="pathway">
    <text evidence="2">Isoprenoid biosynthesis; isopentenyl diphosphate biosynthesis via DXP pathway; isopentenyl diphosphate from 1-deoxy-D-xylulose 5-phosphate: step 2/6.</text>
</comment>
<comment type="subunit">
    <text evidence="2">Homodimer.</text>
</comment>
<comment type="similarity">
    <text evidence="2">Belongs to the IspD/TarI cytidylyltransferase family. IspD subfamily.</text>
</comment>
<proteinExistence type="inferred from homology"/>
<organism>
    <name type="scientific">Shigella flexneri</name>
    <dbReference type="NCBI Taxonomy" id="623"/>
    <lineage>
        <taxon>Bacteria</taxon>
        <taxon>Pseudomonadati</taxon>
        <taxon>Pseudomonadota</taxon>
        <taxon>Gammaproteobacteria</taxon>
        <taxon>Enterobacterales</taxon>
        <taxon>Enterobacteriaceae</taxon>
        <taxon>Shigella</taxon>
    </lineage>
</organism>
<name>ISPD_SHIFL</name>